<evidence type="ECO:0000255" key="1">
    <source>
        <dbReference type="HAMAP-Rule" id="MF_00514"/>
    </source>
</evidence>
<evidence type="ECO:0000256" key="2">
    <source>
        <dbReference type="SAM" id="MobiDB-lite"/>
    </source>
</evidence>
<evidence type="ECO:0000305" key="3"/>
<keyword id="KW-0687">Ribonucleoprotein</keyword>
<keyword id="KW-0689">Ribosomal protein</keyword>
<accession>Q9Z6R8</accession>
<accession>Q9JQC9</accession>
<reference key="1">
    <citation type="journal article" date="1999" name="Nat. Genet.">
        <title>Comparative genomes of Chlamydia pneumoniae and C. trachomatis.</title>
        <authorList>
            <person name="Kalman S."/>
            <person name="Mitchell W.P."/>
            <person name="Marathe R."/>
            <person name="Lammel C.J."/>
            <person name="Fan J."/>
            <person name="Hyman R.W."/>
            <person name="Olinger L."/>
            <person name="Grimwood J."/>
            <person name="Davis R.W."/>
            <person name="Stephens R.S."/>
        </authorList>
    </citation>
    <scope>NUCLEOTIDE SEQUENCE [LARGE SCALE GENOMIC DNA]</scope>
    <source>
        <strain>CWL029</strain>
    </source>
</reference>
<reference key="2">
    <citation type="journal article" date="2000" name="Nucleic Acids Res.">
        <title>Genome sequences of Chlamydia trachomatis MoPn and Chlamydia pneumoniae AR39.</title>
        <authorList>
            <person name="Read T.D."/>
            <person name="Brunham R.C."/>
            <person name="Shen C."/>
            <person name="Gill S.R."/>
            <person name="Heidelberg J.F."/>
            <person name="White O."/>
            <person name="Hickey E.K."/>
            <person name="Peterson J.D."/>
            <person name="Utterback T.R."/>
            <person name="Berry K.J."/>
            <person name="Bass S."/>
            <person name="Linher K.D."/>
            <person name="Weidman J.F."/>
            <person name="Khouri H.M."/>
            <person name="Craven B."/>
            <person name="Bowman C."/>
            <person name="Dodson R.J."/>
            <person name="Gwinn M.L."/>
            <person name="Nelson W.C."/>
            <person name="DeBoy R.T."/>
            <person name="Kolonay J.F."/>
            <person name="McClarty G."/>
            <person name="Salzberg S.L."/>
            <person name="Eisen J.A."/>
            <person name="Fraser C.M."/>
        </authorList>
    </citation>
    <scope>NUCLEOTIDE SEQUENCE [LARGE SCALE GENOMIC DNA]</scope>
    <source>
        <strain>AR39</strain>
    </source>
</reference>
<reference key="3">
    <citation type="journal article" date="2000" name="Nucleic Acids Res.">
        <title>Comparison of whole genome sequences of Chlamydia pneumoniae J138 from Japan and CWL029 from USA.</title>
        <authorList>
            <person name="Shirai M."/>
            <person name="Hirakawa H."/>
            <person name="Kimoto M."/>
            <person name="Tabuchi M."/>
            <person name="Kishi F."/>
            <person name="Ouchi K."/>
            <person name="Shiba T."/>
            <person name="Ishii K."/>
            <person name="Hattori M."/>
            <person name="Kuhara S."/>
            <person name="Nakazawa T."/>
        </authorList>
    </citation>
    <scope>NUCLEOTIDE SEQUENCE [LARGE SCALE GENOMIC DNA]</scope>
    <source>
        <strain>J138</strain>
    </source>
</reference>
<reference key="4">
    <citation type="submission" date="2002-05" db="EMBL/GenBank/DDBJ databases">
        <title>The genome sequence of Chlamydia pneumoniae TW183 and comparison with other Chlamydia strains based on whole genome sequence analysis.</title>
        <authorList>
            <person name="Geng M.M."/>
            <person name="Schuhmacher A."/>
            <person name="Muehldorfer I."/>
            <person name="Bensch K.W."/>
            <person name="Schaefer K.P."/>
            <person name="Schneider S."/>
            <person name="Pohl T."/>
            <person name="Essig A."/>
            <person name="Marre R."/>
            <person name="Melchers K."/>
        </authorList>
    </citation>
    <scope>NUCLEOTIDE SEQUENCE [LARGE SCALE GENOMIC DNA]</scope>
    <source>
        <strain>TW-183</strain>
    </source>
</reference>
<organism>
    <name type="scientific">Chlamydia pneumoniae</name>
    <name type="common">Chlamydophila pneumoniae</name>
    <dbReference type="NCBI Taxonomy" id="83558"/>
    <lineage>
        <taxon>Bacteria</taxon>
        <taxon>Pseudomonadati</taxon>
        <taxon>Chlamydiota</taxon>
        <taxon>Chlamydiia</taxon>
        <taxon>Chlamydiales</taxon>
        <taxon>Chlamydiaceae</taxon>
        <taxon>Chlamydia/Chlamydophila group</taxon>
        <taxon>Chlamydia</taxon>
    </lineage>
</organism>
<name>RL35_CHLPN</name>
<sequence>MPKMKTNKSVSARFKLTASGQLKRTRPGKRHKLSKKSSQEKRNLSKQPLVDKGQVGMYKRMMLV</sequence>
<dbReference type="EMBL" id="AE001363">
    <property type="protein sequence ID" value="AAD19128.1"/>
    <property type="molecule type" value="Genomic_DNA"/>
</dbReference>
<dbReference type="EMBL" id="AE002161">
    <property type="protein sequence ID" value="AAF38653.1"/>
    <property type="molecule type" value="Genomic_DNA"/>
</dbReference>
<dbReference type="EMBL" id="BA000008">
    <property type="protein sequence ID" value="BAA99198.1"/>
    <property type="molecule type" value="Genomic_DNA"/>
</dbReference>
<dbReference type="EMBL" id="AE009440">
    <property type="protein sequence ID" value="AAP98958.1"/>
    <property type="molecule type" value="Genomic_DNA"/>
</dbReference>
<dbReference type="PIR" id="D86614">
    <property type="entry name" value="D86614"/>
</dbReference>
<dbReference type="PIR" id="H72010">
    <property type="entry name" value="H72010"/>
</dbReference>
<dbReference type="RefSeq" id="NP_225185.1">
    <property type="nucleotide sequence ID" value="NC_000922.1"/>
</dbReference>
<dbReference type="RefSeq" id="WP_010883624.1">
    <property type="nucleotide sequence ID" value="NZ_LN847257.1"/>
</dbReference>
<dbReference type="SMR" id="Q9Z6R8"/>
<dbReference type="STRING" id="406984.CPK_ORF00416"/>
<dbReference type="GeneID" id="45051047"/>
<dbReference type="KEGG" id="cpa:CP_0864"/>
<dbReference type="KEGG" id="cpj:rl35"/>
<dbReference type="KEGG" id="cpn:CPn_0991"/>
<dbReference type="KEGG" id="cpt:CpB1029"/>
<dbReference type="PATRIC" id="fig|115713.3.peg.1086"/>
<dbReference type="eggNOG" id="COG0291">
    <property type="taxonomic scope" value="Bacteria"/>
</dbReference>
<dbReference type="HOGENOM" id="CLU_169643_3_0_0"/>
<dbReference type="OMA" id="CKHNHLR"/>
<dbReference type="OrthoDB" id="47476at2"/>
<dbReference type="Proteomes" id="UP000000583">
    <property type="component" value="Chromosome"/>
</dbReference>
<dbReference type="Proteomes" id="UP000000801">
    <property type="component" value="Chromosome"/>
</dbReference>
<dbReference type="GO" id="GO:0022625">
    <property type="term" value="C:cytosolic large ribosomal subunit"/>
    <property type="evidence" value="ECO:0007669"/>
    <property type="project" value="TreeGrafter"/>
</dbReference>
<dbReference type="GO" id="GO:0003735">
    <property type="term" value="F:structural constituent of ribosome"/>
    <property type="evidence" value="ECO:0007669"/>
    <property type="project" value="InterPro"/>
</dbReference>
<dbReference type="GO" id="GO:0006412">
    <property type="term" value="P:translation"/>
    <property type="evidence" value="ECO:0007669"/>
    <property type="project" value="UniProtKB-UniRule"/>
</dbReference>
<dbReference type="FunFam" id="4.10.410.60:FF:000001">
    <property type="entry name" value="50S ribosomal protein L35"/>
    <property type="match status" value="1"/>
</dbReference>
<dbReference type="Gene3D" id="4.10.410.60">
    <property type="match status" value="1"/>
</dbReference>
<dbReference type="HAMAP" id="MF_00514">
    <property type="entry name" value="Ribosomal_bL35"/>
    <property type="match status" value="1"/>
</dbReference>
<dbReference type="InterPro" id="IPR001706">
    <property type="entry name" value="Ribosomal_bL35"/>
</dbReference>
<dbReference type="InterPro" id="IPR021137">
    <property type="entry name" value="Ribosomal_bL35-like"/>
</dbReference>
<dbReference type="InterPro" id="IPR018265">
    <property type="entry name" value="Ribosomal_bL35_CS"/>
</dbReference>
<dbReference type="InterPro" id="IPR037229">
    <property type="entry name" value="Ribosomal_bL35_sf"/>
</dbReference>
<dbReference type="NCBIfam" id="TIGR00001">
    <property type="entry name" value="rpmI_bact"/>
    <property type="match status" value="1"/>
</dbReference>
<dbReference type="PANTHER" id="PTHR33343">
    <property type="entry name" value="54S RIBOSOMAL PROTEIN BL35M"/>
    <property type="match status" value="1"/>
</dbReference>
<dbReference type="PANTHER" id="PTHR33343:SF1">
    <property type="entry name" value="LARGE RIBOSOMAL SUBUNIT PROTEIN BL35M"/>
    <property type="match status" value="1"/>
</dbReference>
<dbReference type="Pfam" id="PF01632">
    <property type="entry name" value="Ribosomal_L35p"/>
    <property type="match status" value="1"/>
</dbReference>
<dbReference type="PRINTS" id="PR00064">
    <property type="entry name" value="RIBOSOMALL35"/>
</dbReference>
<dbReference type="SUPFAM" id="SSF143034">
    <property type="entry name" value="L35p-like"/>
    <property type="match status" value="1"/>
</dbReference>
<dbReference type="PROSITE" id="PS00936">
    <property type="entry name" value="RIBOSOMAL_L35"/>
    <property type="match status" value="1"/>
</dbReference>
<comment type="similarity">
    <text evidence="1">Belongs to the bacterial ribosomal protein bL35 family.</text>
</comment>
<proteinExistence type="inferred from homology"/>
<feature type="chain" id="PRO_0000177347" description="Large ribosomal subunit protein bL35">
    <location>
        <begin position="1"/>
        <end position="64"/>
    </location>
</feature>
<feature type="region of interest" description="Disordered" evidence="2">
    <location>
        <begin position="1"/>
        <end position="55"/>
    </location>
</feature>
<feature type="compositionally biased region" description="Basic residues" evidence="2">
    <location>
        <begin position="23"/>
        <end position="35"/>
    </location>
</feature>
<protein>
    <recommendedName>
        <fullName evidence="1">Large ribosomal subunit protein bL35</fullName>
    </recommendedName>
    <alternativeName>
        <fullName evidence="3">50S ribosomal protein L35</fullName>
    </alternativeName>
</protein>
<gene>
    <name evidence="1" type="primary">rpmI</name>
    <name type="synonym">rl35</name>
    <name type="ordered locus">CPn_0991</name>
    <name type="ordered locus">CP_0864</name>
    <name type="ordered locus">CpB1029</name>
</gene>